<organism>
    <name type="scientific">Idiomarina loihiensis (strain ATCC BAA-735 / DSM 15497 / L2-TR)</name>
    <dbReference type="NCBI Taxonomy" id="283942"/>
    <lineage>
        <taxon>Bacteria</taxon>
        <taxon>Pseudomonadati</taxon>
        <taxon>Pseudomonadota</taxon>
        <taxon>Gammaproteobacteria</taxon>
        <taxon>Alteromonadales</taxon>
        <taxon>Idiomarinaceae</taxon>
        <taxon>Idiomarina</taxon>
    </lineage>
</organism>
<dbReference type="EMBL" id="AE017340">
    <property type="protein sequence ID" value="AAV81684.1"/>
    <property type="molecule type" value="Genomic_DNA"/>
</dbReference>
<dbReference type="RefSeq" id="WP_011234095.1">
    <property type="nucleotide sequence ID" value="NC_006512.1"/>
</dbReference>
<dbReference type="SMR" id="Q5QXS1"/>
<dbReference type="STRING" id="283942.IL0844"/>
<dbReference type="GeneID" id="41336000"/>
<dbReference type="KEGG" id="ilo:IL0844"/>
<dbReference type="eggNOG" id="COG0264">
    <property type="taxonomic scope" value="Bacteria"/>
</dbReference>
<dbReference type="HOGENOM" id="CLU_047155_0_0_6"/>
<dbReference type="OrthoDB" id="9808348at2"/>
<dbReference type="Proteomes" id="UP000001171">
    <property type="component" value="Chromosome"/>
</dbReference>
<dbReference type="GO" id="GO:0005737">
    <property type="term" value="C:cytoplasm"/>
    <property type="evidence" value="ECO:0007669"/>
    <property type="project" value="UniProtKB-SubCell"/>
</dbReference>
<dbReference type="GO" id="GO:0003746">
    <property type="term" value="F:translation elongation factor activity"/>
    <property type="evidence" value="ECO:0007669"/>
    <property type="project" value="UniProtKB-UniRule"/>
</dbReference>
<dbReference type="CDD" id="cd14275">
    <property type="entry name" value="UBA_EF-Ts"/>
    <property type="match status" value="1"/>
</dbReference>
<dbReference type="FunFam" id="1.10.286.20:FF:000001">
    <property type="entry name" value="Elongation factor Ts"/>
    <property type="match status" value="1"/>
</dbReference>
<dbReference type="FunFam" id="1.10.8.10:FF:000001">
    <property type="entry name" value="Elongation factor Ts"/>
    <property type="match status" value="1"/>
</dbReference>
<dbReference type="FunFam" id="3.30.479.20:FF:000001">
    <property type="entry name" value="Elongation factor Ts"/>
    <property type="match status" value="1"/>
</dbReference>
<dbReference type="Gene3D" id="1.10.286.20">
    <property type="match status" value="1"/>
</dbReference>
<dbReference type="Gene3D" id="1.10.8.10">
    <property type="entry name" value="DNA helicase RuvA subunit, C-terminal domain"/>
    <property type="match status" value="1"/>
</dbReference>
<dbReference type="Gene3D" id="3.30.479.20">
    <property type="entry name" value="Elongation factor Ts, dimerisation domain"/>
    <property type="match status" value="2"/>
</dbReference>
<dbReference type="HAMAP" id="MF_00050">
    <property type="entry name" value="EF_Ts"/>
    <property type="match status" value="1"/>
</dbReference>
<dbReference type="InterPro" id="IPR036402">
    <property type="entry name" value="EF-Ts_dimer_sf"/>
</dbReference>
<dbReference type="InterPro" id="IPR001816">
    <property type="entry name" value="Transl_elong_EFTs/EF1B"/>
</dbReference>
<dbReference type="InterPro" id="IPR014039">
    <property type="entry name" value="Transl_elong_EFTs/EF1B_dimer"/>
</dbReference>
<dbReference type="InterPro" id="IPR018101">
    <property type="entry name" value="Transl_elong_Ts_CS"/>
</dbReference>
<dbReference type="InterPro" id="IPR009060">
    <property type="entry name" value="UBA-like_sf"/>
</dbReference>
<dbReference type="NCBIfam" id="TIGR00116">
    <property type="entry name" value="tsf"/>
    <property type="match status" value="1"/>
</dbReference>
<dbReference type="PANTHER" id="PTHR11741">
    <property type="entry name" value="ELONGATION FACTOR TS"/>
    <property type="match status" value="1"/>
</dbReference>
<dbReference type="PANTHER" id="PTHR11741:SF0">
    <property type="entry name" value="ELONGATION FACTOR TS, MITOCHONDRIAL"/>
    <property type="match status" value="1"/>
</dbReference>
<dbReference type="Pfam" id="PF00889">
    <property type="entry name" value="EF_TS"/>
    <property type="match status" value="1"/>
</dbReference>
<dbReference type="SUPFAM" id="SSF54713">
    <property type="entry name" value="Elongation factor Ts (EF-Ts), dimerisation domain"/>
    <property type="match status" value="2"/>
</dbReference>
<dbReference type="SUPFAM" id="SSF46934">
    <property type="entry name" value="UBA-like"/>
    <property type="match status" value="1"/>
</dbReference>
<dbReference type="PROSITE" id="PS01126">
    <property type="entry name" value="EF_TS_1"/>
    <property type="match status" value="1"/>
</dbReference>
<dbReference type="PROSITE" id="PS01127">
    <property type="entry name" value="EF_TS_2"/>
    <property type="match status" value="1"/>
</dbReference>
<evidence type="ECO:0000250" key="1"/>
<evidence type="ECO:0000305" key="2"/>
<accession>Q5QXS1</accession>
<gene>
    <name type="primary">tsf</name>
    <name type="ordered locus">IL0844</name>
</gene>
<feature type="chain" id="PRO_0000161133" description="Elongation factor Ts">
    <location>
        <begin position="1"/>
        <end position="292"/>
    </location>
</feature>
<feature type="region of interest" description="Involved in Mg(2+) ion dislocation from EF-Tu" evidence="1">
    <location>
        <begin position="79"/>
        <end position="82"/>
    </location>
</feature>
<reference key="1">
    <citation type="journal article" date="2004" name="Proc. Natl. Acad. Sci. U.S.A.">
        <title>Genome sequence of the deep-sea gamma-proteobacterium Idiomarina loihiensis reveals amino acid fermentation as a source of carbon and energy.</title>
        <authorList>
            <person name="Hou S."/>
            <person name="Saw J.H."/>
            <person name="Lee K.S."/>
            <person name="Freitas T.A."/>
            <person name="Belisle C."/>
            <person name="Kawarabayasi Y."/>
            <person name="Donachie S.P."/>
            <person name="Pikina A."/>
            <person name="Galperin M.Y."/>
            <person name="Koonin E.V."/>
            <person name="Makarova K.S."/>
            <person name="Omelchenko M.V."/>
            <person name="Sorokin A."/>
            <person name="Wolf Y.I."/>
            <person name="Li Q.X."/>
            <person name="Keum Y.S."/>
            <person name="Campbell S."/>
            <person name="Denery J."/>
            <person name="Aizawa S."/>
            <person name="Shibata S."/>
            <person name="Malahoff A."/>
            <person name="Alam M."/>
        </authorList>
    </citation>
    <scope>NUCLEOTIDE SEQUENCE [LARGE SCALE GENOMIC DNA]</scope>
    <source>
        <strain>ATCC BAA-735 / DSM 15497 / L2-TR</strain>
    </source>
</reference>
<comment type="function">
    <text evidence="1">Associates with the EF-Tu.GDP complex and induces the exchange of GDP to GTP. It remains bound to the aminoacyl-tRNA.EF-Tu.GTP complex up to the GTP hydrolysis stage on the ribosome (By similarity).</text>
</comment>
<comment type="subcellular location">
    <subcellularLocation>
        <location evidence="1">Cytoplasm</location>
    </subcellularLocation>
</comment>
<comment type="similarity">
    <text evidence="2">Belongs to the EF-Ts family.</text>
</comment>
<proteinExistence type="inferred from homology"/>
<sequence length="292" mass="31397">MAITAALVKELRERTGAGMMDCKKALQEVDGDMEAAIELMRKSGQAKAAKKAGRVAAEGVILVKSEGNQATLVELNCETDFVARDDSFLEFGDKVINAAFANKENDVEALKTTDIDGQTVEKTREDLVAKIGENMNVRRVQTLEAGDVVATYTHGARIGVAVALTGGDEDLARDLCMHVAASSPQFVKPEDVAAEVVEKERSIQVDIAMQSGKPKEIAEKMVEGRMRKFTGEISLTGQPFVKDPSMTVGELLKKAGADVVTFVRFEVGEGIERKEEDFASEVQAQVAAASKG</sequence>
<protein>
    <recommendedName>
        <fullName>Elongation factor Ts</fullName>
        <shortName>EF-Ts</shortName>
    </recommendedName>
</protein>
<name>EFTS_IDILO</name>
<keyword id="KW-0963">Cytoplasm</keyword>
<keyword id="KW-0251">Elongation factor</keyword>
<keyword id="KW-0648">Protein biosynthesis</keyword>
<keyword id="KW-1185">Reference proteome</keyword>